<evidence type="ECO:0000255" key="1">
    <source>
        <dbReference type="HAMAP-Rule" id="MF_00075"/>
    </source>
</evidence>
<protein>
    <recommendedName>
        <fullName evidence="1">Translation initiation factor IF-1</fullName>
    </recommendedName>
</protein>
<comment type="function">
    <text evidence="1">One of the essential components for the initiation of protein synthesis. Stabilizes the binding of IF-2 and IF-3 on the 30S subunit to which N-formylmethionyl-tRNA(fMet) subsequently binds. Helps modulate mRNA selection, yielding the 30S pre-initiation complex (PIC). Upon addition of the 50S ribosomal subunit IF-1, IF-2 and IF-3 are released leaving the mature 70S translation initiation complex.</text>
</comment>
<comment type="subunit">
    <text evidence="1">Component of the 30S ribosomal translation pre-initiation complex which assembles on the 30S ribosome in the order IF-2 and IF-3, IF-1 and N-formylmethionyl-tRNA(fMet); mRNA recruitment can occur at any time during PIC assembly.</text>
</comment>
<comment type="subcellular location">
    <subcellularLocation>
        <location evidence="1">Cytoplasm</location>
    </subcellularLocation>
</comment>
<comment type="similarity">
    <text evidence="1">Belongs to the IF-1 family.</text>
</comment>
<gene>
    <name evidence="1" type="primary">infA</name>
    <name type="ordered locus">GTNG_0128</name>
</gene>
<sequence>MAKDDVIEVEGTVIETLPNAMFRVELENGHTVLAHVSGKIRMHFIRILPGDKVTVELSPYDLTRGRITYRYK</sequence>
<proteinExistence type="inferred from homology"/>
<dbReference type="EMBL" id="CP000557">
    <property type="protein sequence ID" value="ABO65515.1"/>
    <property type="molecule type" value="Genomic_DNA"/>
</dbReference>
<dbReference type="RefSeq" id="WP_008881922.1">
    <property type="nucleotide sequence ID" value="NC_009328.1"/>
</dbReference>
<dbReference type="SMR" id="A4IJL1"/>
<dbReference type="GeneID" id="87622303"/>
<dbReference type="KEGG" id="gtn:GTNG_0128"/>
<dbReference type="eggNOG" id="COG0361">
    <property type="taxonomic scope" value="Bacteria"/>
</dbReference>
<dbReference type="HOGENOM" id="CLU_151267_1_0_9"/>
<dbReference type="Proteomes" id="UP000001578">
    <property type="component" value="Chromosome"/>
</dbReference>
<dbReference type="GO" id="GO:0005829">
    <property type="term" value="C:cytosol"/>
    <property type="evidence" value="ECO:0007669"/>
    <property type="project" value="TreeGrafter"/>
</dbReference>
<dbReference type="GO" id="GO:0043022">
    <property type="term" value="F:ribosome binding"/>
    <property type="evidence" value="ECO:0007669"/>
    <property type="project" value="UniProtKB-UniRule"/>
</dbReference>
<dbReference type="GO" id="GO:0019843">
    <property type="term" value="F:rRNA binding"/>
    <property type="evidence" value="ECO:0007669"/>
    <property type="project" value="UniProtKB-UniRule"/>
</dbReference>
<dbReference type="GO" id="GO:0003743">
    <property type="term" value="F:translation initiation factor activity"/>
    <property type="evidence" value="ECO:0007669"/>
    <property type="project" value="UniProtKB-UniRule"/>
</dbReference>
<dbReference type="CDD" id="cd04451">
    <property type="entry name" value="S1_IF1"/>
    <property type="match status" value="1"/>
</dbReference>
<dbReference type="FunFam" id="2.40.50.140:FF:000002">
    <property type="entry name" value="Translation initiation factor IF-1"/>
    <property type="match status" value="1"/>
</dbReference>
<dbReference type="Gene3D" id="2.40.50.140">
    <property type="entry name" value="Nucleic acid-binding proteins"/>
    <property type="match status" value="1"/>
</dbReference>
<dbReference type="HAMAP" id="MF_00075">
    <property type="entry name" value="IF_1"/>
    <property type="match status" value="1"/>
</dbReference>
<dbReference type="InterPro" id="IPR012340">
    <property type="entry name" value="NA-bd_OB-fold"/>
</dbReference>
<dbReference type="InterPro" id="IPR006196">
    <property type="entry name" value="RNA-binding_domain_S1_IF1"/>
</dbReference>
<dbReference type="InterPro" id="IPR003029">
    <property type="entry name" value="S1_domain"/>
</dbReference>
<dbReference type="InterPro" id="IPR004368">
    <property type="entry name" value="TIF_IF1"/>
</dbReference>
<dbReference type="NCBIfam" id="TIGR00008">
    <property type="entry name" value="infA"/>
    <property type="match status" value="1"/>
</dbReference>
<dbReference type="PANTHER" id="PTHR33370">
    <property type="entry name" value="TRANSLATION INITIATION FACTOR IF-1, CHLOROPLASTIC"/>
    <property type="match status" value="1"/>
</dbReference>
<dbReference type="PANTHER" id="PTHR33370:SF1">
    <property type="entry name" value="TRANSLATION INITIATION FACTOR IF-1, CHLOROPLASTIC"/>
    <property type="match status" value="1"/>
</dbReference>
<dbReference type="Pfam" id="PF01176">
    <property type="entry name" value="eIF-1a"/>
    <property type="match status" value="1"/>
</dbReference>
<dbReference type="SMART" id="SM00316">
    <property type="entry name" value="S1"/>
    <property type="match status" value="1"/>
</dbReference>
<dbReference type="SUPFAM" id="SSF50249">
    <property type="entry name" value="Nucleic acid-binding proteins"/>
    <property type="match status" value="1"/>
</dbReference>
<dbReference type="PROSITE" id="PS50832">
    <property type="entry name" value="S1_IF1_TYPE"/>
    <property type="match status" value="1"/>
</dbReference>
<feature type="chain" id="PRO_0000338831" description="Translation initiation factor IF-1">
    <location>
        <begin position="1"/>
        <end position="72"/>
    </location>
</feature>
<feature type="domain" description="S1-like" evidence="1">
    <location>
        <begin position="1"/>
        <end position="72"/>
    </location>
</feature>
<feature type="modified residue" description="Phosphotyrosine" evidence="1">
    <location>
        <position position="60"/>
    </location>
</feature>
<name>IF1_GEOTN</name>
<reference key="1">
    <citation type="journal article" date="2007" name="Proc. Natl. Acad. Sci. U.S.A.">
        <title>Genome and proteome of long-chain alkane degrading Geobacillus thermodenitrificans NG80-2 isolated from a deep-subsurface oil reservoir.</title>
        <authorList>
            <person name="Feng L."/>
            <person name="Wang W."/>
            <person name="Cheng J."/>
            <person name="Ren Y."/>
            <person name="Zhao G."/>
            <person name="Gao C."/>
            <person name="Tang Y."/>
            <person name="Liu X."/>
            <person name="Han W."/>
            <person name="Peng X."/>
            <person name="Liu R."/>
            <person name="Wang L."/>
        </authorList>
    </citation>
    <scope>NUCLEOTIDE SEQUENCE [LARGE SCALE GENOMIC DNA]</scope>
    <source>
        <strain>NG80-2</strain>
    </source>
</reference>
<accession>A4IJL1</accession>
<keyword id="KW-0963">Cytoplasm</keyword>
<keyword id="KW-0396">Initiation factor</keyword>
<keyword id="KW-0597">Phosphoprotein</keyword>
<keyword id="KW-0648">Protein biosynthesis</keyword>
<keyword id="KW-0694">RNA-binding</keyword>
<keyword id="KW-0699">rRNA-binding</keyword>
<organism>
    <name type="scientific">Geobacillus thermodenitrificans (strain NG80-2)</name>
    <dbReference type="NCBI Taxonomy" id="420246"/>
    <lineage>
        <taxon>Bacteria</taxon>
        <taxon>Bacillati</taxon>
        <taxon>Bacillota</taxon>
        <taxon>Bacilli</taxon>
        <taxon>Bacillales</taxon>
        <taxon>Anoxybacillaceae</taxon>
        <taxon>Geobacillus</taxon>
    </lineage>
</organism>